<sequence>MKINQPAVAGTLESGDVMIRIAPLDTQDIDLQINSSVEKQFGDAIRTTILDVLARYNVRGVQLNVDDKGALDCILRARLEALLARASGIPALPWEDCQ</sequence>
<comment type="function">
    <text evidence="1">Covalent carrier of the coenzyme of citrate lyase.</text>
</comment>
<comment type="subunit">
    <text evidence="1">Oligomer with a subunit composition of (alpha,beta,gamma)6.</text>
</comment>
<comment type="subcellular location">
    <subcellularLocation>
        <location evidence="1">Cytoplasm</location>
    </subcellularLocation>
</comment>
<comment type="similarity">
    <text evidence="1">Belongs to the CitD family.</text>
</comment>
<reference key="1">
    <citation type="journal article" date="2006" name="BMC Genomics">
        <title>Complete genome sequence of Shigella flexneri 5b and comparison with Shigella flexneri 2a.</title>
        <authorList>
            <person name="Nie H."/>
            <person name="Yang F."/>
            <person name="Zhang X."/>
            <person name="Yang J."/>
            <person name="Chen L."/>
            <person name="Wang J."/>
            <person name="Xiong Z."/>
            <person name="Peng J."/>
            <person name="Sun L."/>
            <person name="Dong J."/>
            <person name="Xue Y."/>
            <person name="Xu X."/>
            <person name="Chen S."/>
            <person name="Yao Z."/>
            <person name="Shen Y."/>
            <person name="Jin Q."/>
        </authorList>
    </citation>
    <scope>NUCLEOTIDE SEQUENCE [LARGE SCALE GENOMIC DNA]</scope>
    <source>
        <strain>8401</strain>
    </source>
</reference>
<feature type="chain" id="PRO_1000047080" description="Citrate lyase acyl carrier protein">
    <location>
        <begin position="1"/>
        <end position="98"/>
    </location>
</feature>
<feature type="modified residue" description="O-(phosphoribosyl dephospho-coenzyme A)serine" evidence="1">
    <location>
        <position position="14"/>
    </location>
</feature>
<dbReference type="EMBL" id="CP000266">
    <property type="protein sequence ID" value="ABF02827.1"/>
    <property type="molecule type" value="Genomic_DNA"/>
</dbReference>
<dbReference type="RefSeq" id="WP_000700703.1">
    <property type="nucleotide sequence ID" value="NC_008258.1"/>
</dbReference>
<dbReference type="SMR" id="Q0T6Z9"/>
<dbReference type="GeneID" id="93776868"/>
<dbReference type="KEGG" id="sfv:SFV_0570"/>
<dbReference type="HOGENOM" id="CLU_158489_0_0_6"/>
<dbReference type="Proteomes" id="UP000000659">
    <property type="component" value="Chromosome"/>
</dbReference>
<dbReference type="GO" id="GO:0005737">
    <property type="term" value="C:cytoplasm"/>
    <property type="evidence" value="ECO:0007669"/>
    <property type="project" value="UniProtKB-SubCell"/>
</dbReference>
<dbReference type="HAMAP" id="MF_00805">
    <property type="entry name" value="CitD"/>
    <property type="match status" value="1"/>
</dbReference>
<dbReference type="InterPro" id="IPR006495">
    <property type="entry name" value="CitD"/>
</dbReference>
<dbReference type="InterPro" id="IPR023439">
    <property type="entry name" value="Mal_deCO2ase/Cit_lyase_ACP"/>
</dbReference>
<dbReference type="NCBIfam" id="TIGR01608">
    <property type="entry name" value="citD"/>
    <property type="match status" value="1"/>
</dbReference>
<dbReference type="NCBIfam" id="NF009726">
    <property type="entry name" value="PRK13253.1"/>
    <property type="match status" value="1"/>
</dbReference>
<dbReference type="Pfam" id="PF06857">
    <property type="entry name" value="ACP"/>
    <property type="match status" value="1"/>
</dbReference>
<dbReference type="PIRSF" id="PIRSF002736">
    <property type="entry name" value="Citrt_lyas_gamma"/>
    <property type="match status" value="1"/>
</dbReference>
<evidence type="ECO:0000255" key="1">
    <source>
        <dbReference type="HAMAP-Rule" id="MF_00805"/>
    </source>
</evidence>
<protein>
    <recommendedName>
        <fullName evidence="1">Citrate lyase acyl carrier protein</fullName>
    </recommendedName>
    <alternativeName>
        <fullName evidence="1">Citrate lyase gamma chain</fullName>
    </alternativeName>
</protein>
<proteinExistence type="inferred from homology"/>
<keyword id="KW-0963">Cytoplasm</keyword>
<keyword id="KW-0597">Phosphoprotein</keyword>
<organism>
    <name type="scientific">Shigella flexneri serotype 5b (strain 8401)</name>
    <dbReference type="NCBI Taxonomy" id="373384"/>
    <lineage>
        <taxon>Bacteria</taxon>
        <taxon>Pseudomonadati</taxon>
        <taxon>Pseudomonadota</taxon>
        <taxon>Gammaproteobacteria</taxon>
        <taxon>Enterobacterales</taxon>
        <taxon>Enterobacteriaceae</taxon>
        <taxon>Shigella</taxon>
    </lineage>
</organism>
<accession>Q0T6Z9</accession>
<gene>
    <name evidence="1" type="primary">citD</name>
    <name type="ordered locus">SFV_0570</name>
</gene>
<name>CITD_SHIF8</name>